<keyword id="KW-0997">Cell inner membrane</keyword>
<keyword id="KW-1003">Cell membrane</keyword>
<keyword id="KW-0472">Membrane</keyword>
<keyword id="KW-0520">NAD</keyword>
<keyword id="KW-0874">Quinone</keyword>
<keyword id="KW-1278">Translocase</keyword>
<keyword id="KW-0812">Transmembrane</keyword>
<keyword id="KW-1133">Transmembrane helix</keyword>
<keyword id="KW-0830">Ubiquinone</keyword>
<protein>
    <recommendedName>
        <fullName evidence="1">NADH-quinone oxidoreductase subunit H</fullName>
        <ecNumber evidence="1">7.1.1.-</ecNumber>
    </recommendedName>
    <alternativeName>
        <fullName evidence="1">NADH dehydrogenase I subunit H</fullName>
    </alternativeName>
    <alternativeName>
        <fullName evidence="1">NDH-1 subunit H</fullName>
    </alternativeName>
</protein>
<accession>A1JLH7</accession>
<reference key="1">
    <citation type="journal article" date="2006" name="PLoS Genet.">
        <title>The complete genome sequence and comparative genome analysis of the high pathogenicity Yersinia enterocolitica strain 8081.</title>
        <authorList>
            <person name="Thomson N.R."/>
            <person name="Howard S."/>
            <person name="Wren B.W."/>
            <person name="Holden M.T.G."/>
            <person name="Crossman L."/>
            <person name="Challis G.L."/>
            <person name="Churcher C."/>
            <person name="Mungall K."/>
            <person name="Brooks K."/>
            <person name="Chillingworth T."/>
            <person name="Feltwell T."/>
            <person name="Abdellah Z."/>
            <person name="Hauser H."/>
            <person name="Jagels K."/>
            <person name="Maddison M."/>
            <person name="Moule S."/>
            <person name="Sanders M."/>
            <person name="Whitehead S."/>
            <person name="Quail M.A."/>
            <person name="Dougan G."/>
            <person name="Parkhill J."/>
            <person name="Prentice M.B."/>
        </authorList>
    </citation>
    <scope>NUCLEOTIDE SEQUENCE [LARGE SCALE GENOMIC DNA]</scope>
    <source>
        <strain>NCTC 13174 / 8081</strain>
    </source>
</reference>
<name>NUOH_YERE8</name>
<comment type="function">
    <text evidence="1">NDH-1 shuttles electrons from NADH, via FMN and iron-sulfur (Fe-S) centers, to quinones in the respiratory chain. The immediate electron acceptor for the enzyme in this species is believed to be ubiquinone. Couples the redox reaction to proton translocation (for every two electrons transferred, four hydrogen ions are translocated across the cytoplasmic membrane), and thus conserves the redox energy in a proton gradient. This subunit may bind ubiquinone.</text>
</comment>
<comment type="catalytic activity">
    <reaction evidence="1">
        <text>a quinone + NADH + 5 H(+)(in) = a quinol + NAD(+) + 4 H(+)(out)</text>
        <dbReference type="Rhea" id="RHEA:57888"/>
        <dbReference type="ChEBI" id="CHEBI:15378"/>
        <dbReference type="ChEBI" id="CHEBI:24646"/>
        <dbReference type="ChEBI" id="CHEBI:57540"/>
        <dbReference type="ChEBI" id="CHEBI:57945"/>
        <dbReference type="ChEBI" id="CHEBI:132124"/>
    </reaction>
</comment>
<comment type="subunit">
    <text evidence="1">NDH-1 is composed of 13 different subunits. Subunits NuoA, H, J, K, L, M, N constitute the membrane sector of the complex.</text>
</comment>
<comment type="subcellular location">
    <subcellularLocation>
        <location evidence="1">Cell inner membrane</location>
        <topology evidence="1">Multi-pass membrane protein</topology>
    </subcellularLocation>
</comment>
<comment type="similarity">
    <text evidence="1">Belongs to the complex I subunit 1 family.</text>
</comment>
<gene>
    <name evidence="1" type="primary">nuoH</name>
    <name type="ordered locus">YE1350</name>
</gene>
<proteinExistence type="inferred from homology"/>
<dbReference type="EC" id="7.1.1.-" evidence="1"/>
<dbReference type="EMBL" id="AM286415">
    <property type="protein sequence ID" value="CAL11438.1"/>
    <property type="molecule type" value="Genomic_DNA"/>
</dbReference>
<dbReference type="RefSeq" id="WP_005159221.1">
    <property type="nucleotide sequence ID" value="NC_008800.1"/>
</dbReference>
<dbReference type="RefSeq" id="YP_001005666.1">
    <property type="nucleotide sequence ID" value="NC_008800.1"/>
</dbReference>
<dbReference type="SMR" id="A1JLH7"/>
<dbReference type="GeneID" id="97455505"/>
<dbReference type="KEGG" id="yen:YE1350"/>
<dbReference type="PATRIC" id="fig|393305.7.peg.1469"/>
<dbReference type="eggNOG" id="COG1005">
    <property type="taxonomic scope" value="Bacteria"/>
</dbReference>
<dbReference type="HOGENOM" id="CLU_015134_0_1_6"/>
<dbReference type="OrthoDB" id="9803734at2"/>
<dbReference type="Proteomes" id="UP000000642">
    <property type="component" value="Chromosome"/>
</dbReference>
<dbReference type="GO" id="GO:0005886">
    <property type="term" value="C:plasma membrane"/>
    <property type="evidence" value="ECO:0007669"/>
    <property type="project" value="UniProtKB-SubCell"/>
</dbReference>
<dbReference type="GO" id="GO:0003954">
    <property type="term" value="F:NADH dehydrogenase activity"/>
    <property type="evidence" value="ECO:0007669"/>
    <property type="project" value="TreeGrafter"/>
</dbReference>
<dbReference type="GO" id="GO:0016655">
    <property type="term" value="F:oxidoreductase activity, acting on NAD(P)H, quinone or similar compound as acceptor"/>
    <property type="evidence" value="ECO:0007669"/>
    <property type="project" value="UniProtKB-UniRule"/>
</dbReference>
<dbReference type="GO" id="GO:0048038">
    <property type="term" value="F:quinone binding"/>
    <property type="evidence" value="ECO:0007669"/>
    <property type="project" value="UniProtKB-KW"/>
</dbReference>
<dbReference type="GO" id="GO:0009060">
    <property type="term" value="P:aerobic respiration"/>
    <property type="evidence" value="ECO:0007669"/>
    <property type="project" value="TreeGrafter"/>
</dbReference>
<dbReference type="HAMAP" id="MF_01350">
    <property type="entry name" value="NDH1_NuoH"/>
    <property type="match status" value="1"/>
</dbReference>
<dbReference type="InterPro" id="IPR001694">
    <property type="entry name" value="NADH_UbQ_OxRdtase_su1/FPO"/>
</dbReference>
<dbReference type="InterPro" id="IPR018086">
    <property type="entry name" value="NADH_UbQ_OxRdtase_su1_CS"/>
</dbReference>
<dbReference type="NCBIfam" id="NF004740">
    <property type="entry name" value="PRK06076.1-1"/>
    <property type="match status" value="1"/>
</dbReference>
<dbReference type="NCBIfam" id="NF004741">
    <property type="entry name" value="PRK06076.1-2"/>
    <property type="match status" value="1"/>
</dbReference>
<dbReference type="PANTHER" id="PTHR11432">
    <property type="entry name" value="NADH DEHYDROGENASE SUBUNIT 1"/>
    <property type="match status" value="1"/>
</dbReference>
<dbReference type="PANTHER" id="PTHR11432:SF3">
    <property type="entry name" value="NADH-UBIQUINONE OXIDOREDUCTASE CHAIN 1"/>
    <property type="match status" value="1"/>
</dbReference>
<dbReference type="Pfam" id="PF00146">
    <property type="entry name" value="NADHdh"/>
    <property type="match status" value="1"/>
</dbReference>
<dbReference type="PROSITE" id="PS00667">
    <property type="entry name" value="COMPLEX1_ND1_1"/>
    <property type="match status" value="1"/>
</dbReference>
<dbReference type="PROSITE" id="PS00668">
    <property type="entry name" value="COMPLEX1_ND1_2"/>
    <property type="match status" value="1"/>
</dbReference>
<sequence length="325" mass="36187">MSWFTPELIEILISVLKAVVILLVVVTCGAFMSFGERRLLGLFQNRYGPNRVGWGGSLQLVADMIKMFFKEDWVPRFSDRAIFTLAPVIAFTSLLLSFAIVPVSPTWAVADLNIGILFFLMMAGLAVYAVLFAGWSSNNKYSLLGAMRASAQTLSYEVFLGLSLMGVVAQAGSFNMQDIVNSQEHVWNVIPQFFGFVTFAIAGVAVCHRHPFDQPEAEQELADGYHIEYSGMKFGLFFVGEYIGIVTVSALIVTLFFGGWQGPFLPPFIWFALKTAFFMVMFILIRASLPRPRYDQVMSFGWKVCLPLTLLNLLATAAVILYNAQ</sequence>
<evidence type="ECO:0000255" key="1">
    <source>
        <dbReference type="HAMAP-Rule" id="MF_01350"/>
    </source>
</evidence>
<feature type="chain" id="PRO_0000298858" description="NADH-quinone oxidoreductase subunit H">
    <location>
        <begin position="1"/>
        <end position="325"/>
    </location>
</feature>
<feature type="transmembrane region" description="Helical" evidence="1">
    <location>
        <begin position="11"/>
        <end position="31"/>
    </location>
</feature>
<feature type="transmembrane region" description="Helical" evidence="1">
    <location>
        <begin position="81"/>
        <end position="101"/>
    </location>
</feature>
<feature type="transmembrane region" description="Helical" evidence="1">
    <location>
        <begin position="114"/>
        <end position="134"/>
    </location>
</feature>
<feature type="transmembrane region" description="Helical" evidence="1">
    <location>
        <begin position="154"/>
        <end position="174"/>
    </location>
</feature>
<feature type="transmembrane region" description="Helical" evidence="1">
    <location>
        <begin position="186"/>
        <end position="206"/>
    </location>
</feature>
<feature type="transmembrane region" description="Helical" evidence="1">
    <location>
        <begin position="237"/>
        <end position="257"/>
    </location>
</feature>
<feature type="transmembrane region" description="Helical" evidence="1">
    <location>
        <begin position="265"/>
        <end position="285"/>
    </location>
</feature>
<feature type="transmembrane region" description="Helical" evidence="1">
    <location>
        <begin position="304"/>
        <end position="324"/>
    </location>
</feature>
<organism>
    <name type="scientific">Yersinia enterocolitica serotype O:8 / biotype 1B (strain NCTC 13174 / 8081)</name>
    <dbReference type="NCBI Taxonomy" id="393305"/>
    <lineage>
        <taxon>Bacteria</taxon>
        <taxon>Pseudomonadati</taxon>
        <taxon>Pseudomonadota</taxon>
        <taxon>Gammaproteobacteria</taxon>
        <taxon>Enterobacterales</taxon>
        <taxon>Yersiniaceae</taxon>
        <taxon>Yersinia</taxon>
    </lineage>
</organism>